<proteinExistence type="inferred from homology"/>
<evidence type="ECO:0000255" key="1">
    <source>
        <dbReference type="HAMAP-Rule" id="MF_00370"/>
    </source>
</evidence>
<accession>Q8PUH2</accession>
<keyword id="KW-0028">Amino-acid biosynthesis</keyword>
<keyword id="KW-0057">Aromatic amino acid biosynthesis</keyword>
<keyword id="KW-0067">ATP-binding</keyword>
<keyword id="KW-0963">Cytoplasm</keyword>
<keyword id="KW-0418">Kinase</keyword>
<keyword id="KW-0547">Nucleotide-binding</keyword>
<keyword id="KW-0808">Transferase</keyword>
<sequence length="293" mass="30952">MTLEGHACAFGAGTIINAIATWKGAAFGIDLKTFADVELSESESVITGSIKEVPEGDTRLIERCVELVLGRFGLELGGTIRTWSEIPLAGGLKSSSAAANASVLATLHAVGETMPSLEIIKLGVRAAKEVGVTVTGAFDDACASFLGGIVITDNRNMKLIKREEADSRVLIFAPSKKAFSADTNVKRSRLIAPYVEMAYELALAGDYERAMTLNGFLYCGALGFDTEYMLRALECGVKGVSLSGTGPSYAALVKADQVKELKSAWESCGMEGRVIETSINNSGAISFNREGSS</sequence>
<feature type="chain" id="PRO_0000141575" description="Shikimate kinase">
    <location>
        <begin position="1"/>
        <end position="293"/>
    </location>
</feature>
<feature type="binding site" evidence="1">
    <location>
        <begin position="87"/>
        <end position="97"/>
    </location>
    <ligand>
        <name>ATP</name>
        <dbReference type="ChEBI" id="CHEBI:30616"/>
    </ligand>
</feature>
<name>AROK_METMA</name>
<organism>
    <name type="scientific">Methanosarcina mazei (strain ATCC BAA-159 / DSM 3647 / Goe1 / Go1 / JCM 11833 / OCM 88)</name>
    <name type="common">Methanosarcina frisia</name>
    <dbReference type="NCBI Taxonomy" id="192952"/>
    <lineage>
        <taxon>Archaea</taxon>
        <taxon>Methanobacteriati</taxon>
        <taxon>Methanobacteriota</taxon>
        <taxon>Stenosarchaea group</taxon>
        <taxon>Methanomicrobia</taxon>
        <taxon>Methanosarcinales</taxon>
        <taxon>Methanosarcinaceae</taxon>
        <taxon>Methanosarcina</taxon>
    </lineage>
</organism>
<protein>
    <recommendedName>
        <fullName evidence="1">Shikimate kinase</fullName>
        <shortName evidence="1">SK</shortName>
        <ecNumber evidence="1">2.7.1.71</ecNumber>
    </recommendedName>
</protein>
<gene>
    <name evidence="1" type="primary">aroK</name>
    <name type="ordered locus">MM_2362</name>
</gene>
<comment type="catalytic activity">
    <reaction evidence="1">
        <text>shikimate + ATP = 3-phosphoshikimate + ADP + H(+)</text>
        <dbReference type="Rhea" id="RHEA:13121"/>
        <dbReference type="ChEBI" id="CHEBI:15378"/>
        <dbReference type="ChEBI" id="CHEBI:30616"/>
        <dbReference type="ChEBI" id="CHEBI:36208"/>
        <dbReference type="ChEBI" id="CHEBI:145989"/>
        <dbReference type="ChEBI" id="CHEBI:456216"/>
        <dbReference type="EC" id="2.7.1.71"/>
    </reaction>
</comment>
<comment type="pathway">
    <text evidence="1">Metabolic intermediate biosynthesis; chorismate biosynthesis; chorismate from D-erythrose 4-phosphate and phosphoenolpyruvate: step 5/7.</text>
</comment>
<comment type="subcellular location">
    <subcellularLocation>
        <location evidence="1">Cytoplasm</location>
    </subcellularLocation>
</comment>
<comment type="similarity">
    <text evidence="1">Belongs to the GHMP kinase family. Archaeal shikimate kinase subfamily.</text>
</comment>
<dbReference type="EC" id="2.7.1.71" evidence="1"/>
<dbReference type="EMBL" id="AE008384">
    <property type="protein sequence ID" value="AAM32058.1"/>
    <property type="molecule type" value="Genomic_DNA"/>
</dbReference>
<dbReference type="RefSeq" id="WP_011034286.1">
    <property type="nucleotide sequence ID" value="NC_003901.1"/>
</dbReference>
<dbReference type="SMR" id="Q8PUH2"/>
<dbReference type="KEGG" id="mma:MM_2362"/>
<dbReference type="PATRIC" id="fig|192952.21.peg.2703"/>
<dbReference type="eggNOG" id="arCOG01025">
    <property type="taxonomic scope" value="Archaea"/>
</dbReference>
<dbReference type="HOGENOM" id="CLU_073768_0_0_2"/>
<dbReference type="UniPathway" id="UPA00053">
    <property type="reaction ID" value="UER00088"/>
</dbReference>
<dbReference type="Proteomes" id="UP000000595">
    <property type="component" value="Chromosome"/>
</dbReference>
<dbReference type="GO" id="GO:0005737">
    <property type="term" value="C:cytoplasm"/>
    <property type="evidence" value="ECO:0007669"/>
    <property type="project" value="UniProtKB-SubCell"/>
</dbReference>
<dbReference type="GO" id="GO:0005524">
    <property type="term" value="F:ATP binding"/>
    <property type="evidence" value="ECO:0007669"/>
    <property type="project" value="UniProtKB-UniRule"/>
</dbReference>
<dbReference type="GO" id="GO:0004765">
    <property type="term" value="F:shikimate kinase activity"/>
    <property type="evidence" value="ECO:0007669"/>
    <property type="project" value="UniProtKB-UniRule"/>
</dbReference>
<dbReference type="GO" id="GO:0008652">
    <property type="term" value="P:amino acid biosynthetic process"/>
    <property type="evidence" value="ECO:0007669"/>
    <property type="project" value="UniProtKB-KW"/>
</dbReference>
<dbReference type="GO" id="GO:0009073">
    <property type="term" value="P:aromatic amino acid family biosynthetic process"/>
    <property type="evidence" value="ECO:0007669"/>
    <property type="project" value="UniProtKB-KW"/>
</dbReference>
<dbReference type="GO" id="GO:0009423">
    <property type="term" value="P:chorismate biosynthetic process"/>
    <property type="evidence" value="ECO:0007669"/>
    <property type="project" value="UniProtKB-UniRule"/>
</dbReference>
<dbReference type="Gene3D" id="3.30.230.10">
    <property type="match status" value="1"/>
</dbReference>
<dbReference type="HAMAP" id="MF_00370">
    <property type="entry name" value="Shik_kinase_arch"/>
    <property type="match status" value="1"/>
</dbReference>
<dbReference type="InterPro" id="IPR013750">
    <property type="entry name" value="GHMP_kinase_C_dom"/>
</dbReference>
<dbReference type="InterPro" id="IPR036554">
    <property type="entry name" value="GHMP_kinase_C_sf"/>
</dbReference>
<dbReference type="InterPro" id="IPR006204">
    <property type="entry name" value="GHMP_kinase_N_dom"/>
</dbReference>
<dbReference type="InterPro" id="IPR020568">
    <property type="entry name" value="Ribosomal_Su5_D2-typ_SF"/>
</dbReference>
<dbReference type="InterPro" id="IPR014721">
    <property type="entry name" value="Ribsml_uS5_D2-typ_fold_subgr"/>
</dbReference>
<dbReference type="InterPro" id="IPR010189">
    <property type="entry name" value="SK_arc"/>
</dbReference>
<dbReference type="NCBIfam" id="TIGR01920">
    <property type="entry name" value="Shik_kin_archae"/>
    <property type="match status" value="1"/>
</dbReference>
<dbReference type="PANTHER" id="PTHR20861">
    <property type="entry name" value="HOMOSERINE/4-DIPHOSPHOCYTIDYL-2-C-METHYL-D-ERYTHRITOL KINASE"/>
    <property type="match status" value="1"/>
</dbReference>
<dbReference type="PANTHER" id="PTHR20861:SF3">
    <property type="entry name" value="SHIKIMATE KINASE"/>
    <property type="match status" value="1"/>
</dbReference>
<dbReference type="Pfam" id="PF08544">
    <property type="entry name" value="GHMP_kinases_C"/>
    <property type="match status" value="1"/>
</dbReference>
<dbReference type="Pfam" id="PF00288">
    <property type="entry name" value="GHMP_kinases_N"/>
    <property type="match status" value="1"/>
</dbReference>
<dbReference type="PIRSF" id="PIRSF005758">
    <property type="entry name" value="Shikimt_kin_arch"/>
    <property type="match status" value="1"/>
</dbReference>
<dbReference type="SUPFAM" id="SSF55060">
    <property type="entry name" value="GHMP Kinase, C-terminal domain"/>
    <property type="match status" value="1"/>
</dbReference>
<dbReference type="SUPFAM" id="SSF54211">
    <property type="entry name" value="Ribosomal protein S5 domain 2-like"/>
    <property type="match status" value="1"/>
</dbReference>
<reference key="1">
    <citation type="journal article" date="2002" name="J. Mol. Microbiol. Biotechnol.">
        <title>The genome of Methanosarcina mazei: evidence for lateral gene transfer between Bacteria and Archaea.</title>
        <authorList>
            <person name="Deppenmeier U."/>
            <person name="Johann A."/>
            <person name="Hartsch T."/>
            <person name="Merkl R."/>
            <person name="Schmitz R.A."/>
            <person name="Martinez-Arias R."/>
            <person name="Henne A."/>
            <person name="Wiezer A."/>
            <person name="Baeumer S."/>
            <person name="Jacobi C."/>
            <person name="Brueggemann H."/>
            <person name="Lienard T."/>
            <person name="Christmann A."/>
            <person name="Boemecke M."/>
            <person name="Steckel S."/>
            <person name="Bhattacharyya A."/>
            <person name="Lykidis A."/>
            <person name="Overbeek R."/>
            <person name="Klenk H.-P."/>
            <person name="Gunsalus R.P."/>
            <person name="Fritz H.-J."/>
            <person name="Gottschalk G."/>
        </authorList>
    </citation>
    <scope>NUCLEOTIDE SEQUENCE [LARGE SCALE GENOMIC DNA]</scope>
    <source>
        <strain>ATCC BAA-159 / DSM 3647 / Goe1 / Go1 / JCM 11833 / OCM 88</strain>
    </source>
</reference>